<evidence type="ECO:0000305" key="1"/>
<feature type="chain" id="PRO_0000080295" description="Spore coat protein SA">
    <location>
        <begin position="1"/>
        <end position="377"/>
    </location>
</feature>
<name>COTSA_BACSU</name>
<sequence>MKIALIATEKLPVPSVRGGAIQIYLEAVAPLIAKKHEVTVFSIKDPNLADREKVDGVHYVHLDEDRYEEAVGAELKKSRFDLVHVCNRPSWVPKLKKQAPDAVFILSVHNEMFAYDKISQAEGEICIDSVAQIVTVSDYIGQTITSRFPSARSKTKTVYSGVDLKTYHPRWTNEGQRAREEMRSELGLHGKKIVLFVGRLSKVKGPHILLQALPDIIEEHPDVMMVFIGSKWFGDNELNNYVKHLHTLGAMQKDHVTFIQFVKPKDIPRLYTMSDVFVCSSQWQEPLARVHYEAMAAGLPIITSNRGGNPEVIEEGKNGYIIHDFENPKQYAERINDLLSSSEKRERLGKYSRREAESNFGWQRVAENLLSVYEKNR</sequence>
<dbReference type="EC" id="2.4.-.-"/>
<dbReference type="EMBL" id="D31847">
    <property type="protein sequence ID" value="BAA06633.1"/>
    <property type="molecule type" value="Genomic_DNA"/>
</dbReference>
<dbReference type="EMBL" id="AF008220">
    <property type="protein sequence ID" value="AAC00219.1"/>
    <property type="molecule type" value="Genomic_DNA"/>
</dbReference>
<dbReference type="EMBL" id="AL009126">
    <property type="protein sequence ID" value="CAB15069.1"/>
    <property type="molecule type" value="Genomic_DNA"/>
</dbReference>
<dbReference type="PIR" id="A70004">
    <property type="entry name" value="A70004"/>
</dbReference>
<dbReference type="RefSeq" id="NP_390969.1">
    <property type="nucleotide sequence ID" value="NC_000964.3"/>
</dbReference>
<dbReference type="RefSeq" id="WP_003229028.1">
    <property type="nucleotide sequence ID" value="NZ_OZ025638.1"/>
</dbReference>
<dbReference type="SMR" id="P46915"/>
<dbReference type="FunCoup" id="P46915">
    <property type="interactions" value="241"/>
</dbReference>
<dbReference type="STRING" id="224308.BSU30910"/>
<dbReference type="CAZy" id="GT4">
    <property type="family name" value="Glycosyltransferase Family 4"/>
</dbReference>
<dbReference type="PaxDb" id="224308-BSU30910"/>
<dbReference type="DNASU" id="936379"/>
<dbReference type="EnsemblBacteria" id="CAB15069">
    <property type="protein sequence ID" value="CAB15069"/>
    <property type="gene ID" value="BSU_30910"/>
</dbReference>
<dbReference type="GeneID" id="936379"/>
<dbReference type="KEGG" id="bsu:BSU30910"/>
<dbReference type="PATRIC" id="fig|224308.179.peg.3350"/>
<dbReference type="eggNOG" id="COG0438">
    <property type="taxonomic scope" value="Bacteria"/>
</dbReference>
<dbReference type="InParanoid" id="P46915"/>
<dbReference type="OrthoDB" id="139410at2"/>
<dbReference type="PhylomeDB" id="P46915"/>
<dbReference type="BioCyc" id="BSUB:BSU30910-MONOMER"/>
<dbReference type="Proteomes" id="UP000001570">
    <property type="component" value="Chromosome"/>
</dbReference>
<dbReference type="GO" id="GO:0016757">
    <property type="term" value="F:glycosyltransferase activity"/>
    <property type="evidence" value="ECO:0000318"/>
    <property type="project" value="GO_Central"/>
</dbReference>
<dbReference type="GO" id="GO:0009058">
    <property type="term" value="P:biosynthetic process"/>
    <property type="evidence" value="ECO:0007669"/>
    <property type="project" value="UniProtKB-ARBA"/>
</dbReference>
<dbReference type="GO" id="GO:0030435">
    <property type="term" value="P:sporulation resulting in formation of a cellular spore"/>
    <property type="evidence" value="ECO:0007669"/>
    <property type="project" value="UniProtKB-KW"/>
</dbReference>
<dbReference type="CDD" id="cd03801">
    <property type="entry name" value="GT4_PimA-like"/>
    <property type="match status" value="1"/>
</dbReference>
<dbReference type="Gene3D" id="3.40.50.2000">
    <property type="entry name" value="Glycogen Phosphorylase B"/>
    <property type="match status" value="2"/>
</dbReference>
<dbReference type="InterPro" id="IPR001296">
    <property type="entry name" value="Glyco_trans_1"/>
</dbReference>
<dbReference type="InterPro" id="IPR028098">
    <property type="entry name" value="Glyco_trans_4-like_N"/>
</dbReference>
<dbReference type="PANTHER" id="PTHR12526">
    <property type="entry name" value="GLYCOSYLTRANSFERASE"/>
    <property type="match status" value="1"/>
</dbReference>
<dbReference type="PANTHER" id="PTHR12526:SF638">
    <property type="entry name" value="SPORE COAT PROTEIN SA"/>
    <property type="match status" value="1"/>
</dbReference>
<dbReference type="Pfam" id="PF13439">
    <property type="entry name" value="Glyco_transf_4"/>
    <property type="match status" value="1"/>
</dbReference>
<dbReference type="Pfam" id="PF00534">
    <property type="entry name" value="Glycos_transf_1"/>
    <property type="match status" value="1"/>
</dbReference>
<dbReference type="SUPFAM" id="SSF53756">
    <property type="entry name" value="UDP-Glycosyltransferase/glycogen phosphorylase"/>
    <property type="match status" value="1"/>
</dbReference>
<keyword id="KW-0328">Glycosyltransferase</keyword>
<keyword id="KW-1185">Reference proteome</keyword>
<keyword id="KW-0749">Sporulation</keyword>
<keyword id="KW-0808">Transferase</keyword>
<comment type="similarity">
    <text evidence="1">Belongs to the glycosyltransferase group 1 family. Glycosyltransferase 4 subfamily.</text>
</comment>
<protein>
    <recommendedName>
        <fullName>Spore coat protein SA</fullName>
        <ecNumber>2.4.-.-</ecNumber>
    </recommendedName>
</protein>
<accession>P46915</accession>
<reference key="1">
    <citation type="journal article" date="1995" name="Microbiology">
        <title>A Bacillus subtilis spore coat polypeptide gene, cotS.</title>
        <authorList>
            <person name="Abe A."/>
            <person name="Koide H."/>
            <person name="Kohno T."/>
            <person name="Watabe K."/>
        </authorList>
    </citation>
    <scope>NUCLEOTIDE SEQUENCE [GENOMIC DNA]</scope>
    <source>
        <strain>168 / 60015</strain>
    </source>
</reference>
<reference key="2">
    <citation type="journal article" date="1997" name="Microbiology">
        <title>Sequencing and functional annotation of the Bacillus subtilis genes in the 200 kb rrnB-dnaB region.</title>
        <authorList>
            <person name="Lapidus A."/>
            <person name="Galleron N."/>
            <person name="Sorokin A."/>
            <person name="Ehrlich S.D."/>
        </authorList>
    </citation>
    <scope>NUCLEOTIDE SEQUENCE [GENOMIC DNA]</scope>
    <source>
        <strain>168</strain>
    </source>
</reference>
<reference key="3">
    <citation type="journal article" date="1997" name="Nature">
        <title>The complete genome sequence of the Gram-positive bacterium Bacillus subtilis.</title>
        <authorList>
            <person name="Kunst F."/>
            <person name="Ogasawara N."/>
            <person name="Moszer I."/>
            <person name="Albertini A.M."/>
            <person name="Alloni G."/>
            <person name="Azevedo V."/>
            <person name="Bertero M.G."/>
            <person name="Bessieres P."/>
            <person name="Bolotin A."/>
            <person name="Borchert S."/>
            <person name="Borriss R."/>
            <person name="Boursier L."/>
            <person name="Brans A."/>
            <person name="Braun M."/>
            <person name="Brignell S.C."/>
            <person name="Bron S."/>
            <person name="Brouillet S."/>
            <person name="Bruschi C.V."/>
            <person name="Caldwell B."/>
            <person name="Capuano V."/>
            <person name="Carter N.M."/>
            <person name="Choi S.-K."/>
            <person name="Codani J.-J."/>
            <person name="Connerton I.F."/>
            <person name="Cummings N.J."/>
            <person name="Daniel R.A."/>
            <person name="Denizot F."/>
            <person name="Devine K.M."/>
            <person name="Duesterhoeft A."/>
            <person name="Ehrlich S.D."/>
            <person name="Emmerson P.T."/>
            <person name="Entian K.-D."/>
            <person name="Errington J."/>
            <person name="Fabret C."/>
            <person name="Ferrari E."/>
            <person name="Foulger D."/>
            <person name="Fritz C."/>
            <person name="Fujita M."/>
            <person name="Fujita Y."/>
            <person name="Fuma S."/>
            <person name="Galizzi A."/>
            <person name="Galleron N."/>
            <person name="Ghim S.-Y."/>
            <person name="Glaser P."/>
            <person name="Goffeau A."/>
            <person name="Golightly E.J."/>
            <person name="Grandi G."/>
            <person name="Guiseppi G."/>
            <person name="Guy B.J."/>
            <person name="Haga K."/>
            <person name="Haiech J."/>
            <person name="Harwood C.R."/>
            <person name="Henaut A."/>
            <person name="Hilbert H."/>
            <person name="Holsappel S."/>
            <person name="Hosono S."/>
            <person name="Hullo M.-F."/>
            <person name="Itaya M."/>
            <person name="Jones L.-M."/>
            <person name="Joris B."/>
            <person name="Karamata D."/>
            <person name="Kasahara Y."/>
            <person name="Klaerr-Blanchard M."/>
            <person name="Klein C."/>
            <person name="Kobayashi Y."/>
            <person name="Koetter P."/>
            <person name="Koningstein G."/>
            <person name="Krogh S."/>
            <person name="Kumano M."/>
            <person name="Kurita K."/>
            <person name="Lapidus A."/>
            <person name="Lardinois S."/>
            <person name="Lauber J."/>
            <person name="Lazarevic V."/>
            <person name="Lee S.-M."/>
            <person name="Levine A."/>
            <person name="Liu H."/>
            <person name="Masuda S."/>
            <person name="Mauel C."/>
            <person name="Medigue C."/>
            <person name="Medina N."/>
            <person name="Mellado R.P."/>
            <person name="Mizuno M."/>
            <person name="Moestl D."/>
            <person name="Nakai S."/>
            <person name="Noback M."/>
            <person name="Noone D."/>
            <person name="O'Reilly M."/>
            <person name="Ogawa K."/>
            <person name="Ogiwara A."/>
            <person name="Oudega B."/>
            <person name="Park S.-H."/>
            <person name="Parro V."/>
            <person name="Pohl T.M."/>
            <person name="Portetelle D."/>
            <person name="Porwollik S."/>
            <person name="Prescott A.M."/>
            <person name="Presecan E."/>
            <person name="Pujic P."/>
            <person name="Purnelle B."/>
            <person name="Rapoport G."/>
            <person name="Rey M."/>
            <person name="Reynolds S."/>
            <person name="Rieger M."/>
            <person name="Rivolta C."/>
            <person name="Rocha E."/>
            <person name="Roche B."/>
            <person name="Rose M."/>
            <person name="Sadaie Y."/>
            <person name="Sato T."/>
            <person name="Scanlan E."/>
            <person name="Schleich S."/>
            <person name="Schroeter R."/>
            <person name="Scoffone F."/>
            <person name="Sekiguchi J."/>
            <person name="Sekowska A."/>
            <person name="Seror S.J."/>
            <person name="Serror P."/>
            <person name="Shin B.-S."/>
            <person name="Soldo B."/>
            <person name="Sorokin A."/>
            <person name="Tacconi E."/>
            <person name="Takagi T."/>
            <person name="Takahashi H."/>
            <person name="Takemaru K."/>
            <person name="Takeuchi M."/>
            <person name="Tamakoshi A."/>
            <person name="Tanaka T."/>
            <person name="Terpstra P."/>
            <person name="Tognoni A."/>
            <person name="Tosato V."/>
            <person name="Uchiyama S."/>
            <person name="Vandenbol M."/>
            <person name="Vannier F."/>
            <person name="Vassarotti A."/>
            <person name="Viari A."/>
            <person name="Wambutt R."/>
            <person name="Wedler E."/>
            <person name="Wedler H."/>
            <person name="Weitzenegger T."/>
            <person name="Winters P."/>
            <person name="Wipat A."/>
            <person name="Yamamoto H."/>
            <person name="Yamane K."/>
            <person name="Yasumoto K."/>
            <person name="Yata K."/>
            <person name="Yoshida K."/>
            <person name="Yoshikawa H.-F."/>
            <person name="Zumstein E."/>
            <person name="Yoshikawa H."/>
            <person name="Danchin A."/>
        </authorList>
    </citation>
    <scope>NUCLEOTIDE SEQUENCE [LARGE SCALE GENOMIC DNA]</scope>
    <source>
        <strain>168</strain>
    </source>
</reference>
<reference key="4">
    <citation type="journal article" date="1999" name="FEMS Microbiol. Lett.">
        <title>Assembly of the CotSA coat protein into spores requires CotS in Bacillus subtilis.</title>
        <authorList>
            <person name="Takamatsu H."/>
            <person name="Kodama T."/>
            <person name="Watabe K."/>
        </authorList>
    </citation>
    <scope>CHARACTERIZATION</scope>
</reference>
<gene>
    <name type="primary">cotSA</name>
    <name type="synonym">ytbA</name>
    <name type="synonym">ytxN</name>
    <name type="ordered locus">BSU30910</name>
</gene>
<organism>
    <name type="scientific">Bacillus subtilis (strain 168)</name>
    <dbReference type="NCBI Taxonomy" id="224308"/>
    <lineage>
        <taxon>Bacteria</taxon>
        <taxon>Bacillati</taxon>
        <taxon>Bacillota</taxon>
        <taxon>Bacilli</taxon>
        <taxon>Bacillales</taxon>
        <taxon>Bacillaceae</taxon>
        <taxon>Bacillus</taxon>
    </lineage>
</organism>
<proteinExistence type="evidence at protein level"/>